<protein>
    <recommendedName>
        <fullName evidence="1">UPF0313 protein CLJ_B0249</fullName>
    </recommendedName>
</protein>
<sequence>MSNMDFLPISKEDLKKRNIDVLDFIIVTGDAYVDHPSFGTAIIGRVLEREGFTVGIIAQPNWNNIEDFKKLGKPKYGFLVNSGNIDSMVNHYTASKKKRHDDFYSPGGKSGYRPDRAVIVYCNKIKEAFKDSPIIIGGIEASLRRFAHYDYWDNSVRRSILEDSSADLLIYGMGEKPIVQVSNLLRYGMKIDSIKNVRGTTYIERDISPLKDYIEIPSFEEVSTNKKSYAEAYKIQYYEQDSIRGKTLVQKHKERYVVQNPPQPPLSQEEMDEVYALPYARTYHPMYEAEGGIPAIKEVKFSITSHRGCYGSCSFCALTFHQGRVIQNRSQDSILKEANMMTNMKDFKGYIHDVGGPTANFRHRACKVQEEHGTCKNKQCVFPKACKNLIIDHKEYLSLLKKIRKIPNVKKVFIRSGIRFDYLMYDKNDEFFKELCEHHISGQLKVAPEHISDKVLNLMGKPTRNVYDSFVKKYYDINKKIHKNQFLVPYLMSSHPGSDLKAAIELAQYIKKMGYTPEQVQDFYPTPGSLSTTMYYTGINPLTEEKVYVPKEQKEKRMQRSLLQFSIPDNYDLVKEALIKAHREDLIGNGPDCLIPYNKPYKKSHKKNNAKNKNNNYNKNKDVSKKNKKNSLSKHKKRK</sequence>
<evidence type="ECO:0000255" key="1">
    <source>
        <dbReference type="HAMAP-Rule" id="MF_01251"/>
    </source>
</evidence>
<evidence type="ECO:0000255" key="2">
    <source>
        <dbReference type="PROSITE-ProRule" id="PRU01266"/>
    </source>
</evidence>
<evidence type="ECO:0000256" key="3">
    <source>
        <dbReference type="SAM" id="MobiDB-lite"/>
    </source>
</evidence>
<name>Y249_CLOB6</name>
<feature type="chain" id="PRO_1000214114" description="UPF0313 protein CLJ_B0249">
    <location>
        <begin position="1"/>
        <end position="639"/>
    </location>
</feature>
<feature type="domain" description="Radical SAM core" evidence="2">
    <location>
        <begin position="295"/>
        <end position="566"/>
    </location>
</feature>
<feature type="region of interest" description="Disordered" evidence="3">
    <location>
        <begin position="597"/>
        <end position="639"/>
    </location>
</feature>
<feature type="compositionally biased region" description="Basic residues" evidence="3">
    <location>
        <begin position="600"/>
        <end position="610"/>
    </location>
</feature>
<feature type="compositionally biased region" description="Basic residues" evidence="3">
    <location>
        <begin position="626"/>
        <end position="639"/>
    </location>
</feature>
<feature type="binding site" evidence="1">
    <location>
        <position position="309"/>
    </location>
    <ligand>
        <name>[4Fe-4S] cluster</name>
        <dbReference type="ChEBI" id="CHEBI:49883"/>
        <note>4Fe-4S-S-AdoMet</note>
    </ligand>
</feature>
<feature type="binding site" evidence="1">
    <location>
        <position position="313"/>
    </location>
    <ligand>
        <name>[4Fe-4S] cluster</name>
        <dbReference type="ChEBI" id="CHEBI:49883"/>
        <note>4Fe-4S-S-AdoMet</note>
    </ligand>
</feature>
<feature type="binding site" evidence="1">
    <location>
        <position position="316"/>
    </location>
    <ligand>
        <name>[4Fe-4S] cluster</name>
        <dbReference type="ChEBI" id="CHEBI:49883"/>
        <note>4Fe-4S-S-AdoMet</note>
    </ligand>
</feature>
<organism>
    <name type="scientific">Clostridium botulinum (strain 657 / Type Ba4)</name>
    <dbReference type="NCBI Taxonomy" id="515621"/>
    <lineage>
        <taxon>Bacteria</taxon>
        <taxon>Bacillati</taxon>
        <taxon>Bacillota</taxon>
        <taxon>Clostridia</taxon>
        <taxon>Eubacteriales</taxon>
        <taxon>Clostridiaceae</taxon>
        <taxon>Clostridium</taxon>
    </lineage>
</organism>
<accession>C3KYN9</accession>
<gene>
    <name type="ordered locus">CLJ_B0249</name>
</gene>
<reference key="1">
    <citation type="submission" date="2008-05" db="EMBL/GenBank/DDBJ databases">
        <title>Genome sequence of Clostridium botulinum Ba4 strain 657.</title>
        <authorList>
            <person name="Shrivastava S."/>
            <person name="Brown J.L."/>
            <person name="Bruce D."/>
            <person name="Detter C."/>
            <person name="Munk C."/>
            <person name="Smith L.A."/>
            <person name="Smith T.J."/>
            <person name="Sutton G."/>
            <person name="Brettin T.S."/>
        </authorList>
    </citation>
    <scope>NUCLEOTIDE SEQUENCE [LARGE SCALE GENOMIC DNA]</scope>
    <source>
        <strain>657 / Type Ba4</strain>
    </source>
</reference>
<proteinExistence type="inferred from homology"/>
<dbReference type="EMBL" id="CP001083">
    <property type="protein sequence ID" value="ACQ54848.1"/>
    <property type="molecule type" value="Genomic_DNA"/>
</dbReference>
<dbReference type="RefSeq" id="WP_012721331.1">
    <property type="nucleotide sequence ID" value="NC_012658.1"/>
</dbReference>
<dbReference type="KEGG" id="cbi:CLJ_B0249"/>
<dbReference type="HOGENOM" id="CLU_018288_2_0_9"/>
<dbReference type="Proteomes" id="UP000002333">
    <property type="component" value="Chromosome"/>
</dbReference>
<dbReference type="GO" id="GO:0051539">
    <property type="term" value="F:4 iron, 4 sulfur cluster binding"/>
    <property type="evidence" value="ECO:0007669"/>
    <property type="project" value="UniProtKB-KW"/>
</dbReference>
<dbReference type="GO" id="GO:0003824">
    <property type="term" value="F:catalytic activity"/>
    <property type="evidence" value="ECO:0007669"/>
    <property type="project" value="InterPro"/>
</dbReference>
<dbReference type="GO" id="GO:0005506">
    <property type="term" value="F:iron ion binding"/>
    <property type="evidence" value="ECO:0007669"/>
    <property type="project" value="UniProtKB-UniRule"/>
</dbReference>
<dbReference type="Gene3D" id="3.80.30.20">
    <property type="entry name" value="tm_1862 like domain"/>
    <property type="match status" value="1"/>
</dbReference>
<dbReference type="HAMAP" id="MF_01251">
    <property type="entry name" value="UPF0313"/>
    <property type="match status" value="1"/>
</dbReference>
<dbReference type="InterPro" id="IPR006638">
    <property type="entry name" value="Elp3/MiaA/NifB-like_rSAM"/>
</dbReference>
<dbReference type="InterPro" id="IPR007197">
    <property type="entry name" value="rSAM"/>
</dbReference>
<dbReference type="InterPro" id="IPR023404">
    <property type="entry name" value="rSAM_horseshoe"/>
</dbReference>
<dbReference type="InterPro" id="IPR022946">
    <property type="entry name" value="UPF0313"/>
</dbReference>
<dbReference type="InterPro" id="IPR024560">
    <property type="entry name" value="UPF0313_C"/>
</dbReference>
<dbReference type="InterPro" id="IPR013704">
    <property type="entry name" value="UPF0313_N"/>
</dbReference>
<dbReference type="NCBIfam" id="TIGR03904">
    <property type="entry name" value="SAM_YgiQ"/>
    <property type="match status" value="1"/>
</dbReference>
<dbReference type="PANTHER" id="PTHR32331">
    <property type="entry name" value="UPF0313 PROTEIN YGIQ"/>
    <property type="match status" value="1"/>
</dbReference>
<dbReference type="PANTHER" id="PTHR32331:SF0">
    <property type="entry name" value="UPF0313 PROTEIN YGIQ"/>
    <property type="match status" value="1"/>
</dbReference>
<dbReference type="Pfam" id="PF11842">
    <property type="entry name" value="DUF3362"/>
    <property type="match status" value="1"/>
</dbReference>
<dbReference type="Pfam" id="PF04055">
    <property type="entry name" value="Radical_SAM"/>
    <property type="match status" value="1"/>
</dbReference>
<dbReference type="Pfam" id="PF08497">
    <property type="entry name" value="Radical_SAM_N"/>
    <property type="match status" value="1"/>
</dbReference>
<dbReference type="SFLD" id="SFLDG01082">
    <property type="entry name" value="B12-binding_domain_containing"/>
    <property type="match status" value="1"/>
</dbReference>
<dbReference type="SFLD" id="SFLDS00029">
    <property type="entry name" value="Radical_SAM"/>
    <property type="match status" value="1"/>
</dbReference>
<dbReference type="SFLD" id="SFLDG01069">
    <property type="entry name" value="UPF0313"/>
    <property type="match status" value="1"/>
</dbReference>
<dbReference type="SMART" id="SM00729">
    <property type="entry name" value="Elp3"/>
    <property type="match status" value="1"/>
</dbReference>
<dbReference type="SUPFAM" id="SSF102114">
    <property type="entry name" value="Radical SAM enzymes"/>
    <property type="match status" value="1"/>
</dbReference>
<dbReference type="PROSITE" id="PS51918">
    <property type="entry name" value="RADICAL_SAM"/>
    <property type="match status" value="1"/>
</dbReference>
<keyword id="KW-0004">4Fe-4S</keyword>
<keyword id="KW-0408">Iron</keyword>
<keyword id="KW-0411">Iron-sulfur</keyword>
<keyword id="KW-0479">Metal-binding</keyword>
<keyword id="KW-0949">S-adenosyl-L-methionine</keyword>
<comment type="cofactor">
    <cofactor evidence="1">
        <name>[4Fe-4S] cluster</name>
        <dbReference type="ChEBI" id="CHEBI:49883"/>
    </cofactor>
    <text evidence="1">Binds 1 [4Fe-4S] cluster. The cluster is coordinated with 3 cysteines and an exchangeable S-adenosyl-L-methionine.</text>
</comment>
<comment type="similarity">
    <text evidence="1">Belongs to the UPF0313 family.</text>
</comment>